<gene>
    <name type="ordered locus">Smed_0659</name>
</gene>
<evidence type="ECO:0000255" key="1">
    <source>
        <dbReference type="HAMAP-Rule" id="MF_00010"/>
    </source>
</evidence>
<feature type="chain" id="PRO_1000000766" description="UPF0060 membrane protein Smed_0659">
    <location>
        <begin position="1"/>
        <end position="106"/>
    </location>
</feature>
<feature type="transmembrane region" description="Helical" evidence="1">
    <location>
        <begin position="4"/>
        <end position="24"/>
    </location>
</feature>
<feature type="transmembrane region" description="Helical" evidence="1">
    <location>
        <begin position="31"/>
        <end position="51"/>
    </location>
</feature>
<feature type="transmembrane region" description="Helical" evidence="1">
    <location>
        <begin position="61"/>
        <end position="81"/>
    </location>
</feature>
<proteinExistence type="inferred from homology"/>
<name>Y659_SINMW</name>
<keyword id="KW-0997">Cell inner membrane</keyword>
<keyword id="KW-1003">Cell membrane</keyword>
<keyword id="KW-0472">Membrane</keyword>
<keyword id="KW-0812">Transmembrane</keyword>
<keyword id="KW-1133">Transmembrane helix</keyword>
<reference key="1">
    <citation type="submission" date="2007-06" db="EMBL/GenBank/DDBJ databases">
        <title>Complete sequence of Sinorhizobium medicae WSM419 chromosome.</title>
        <authorList>
            <consortium name="US DOE Joint Genome Institute"/>
            <person name="Copeland A."/>
            <person name="Lucas S."/>
            <person name="Lapidus A."/>
            <person name="Barry K."/>
            <person name="Glavina del Rio T."/>
            <person name="Dalin E."/>
            <person name="Tice H."/>
            <person name="Pitluck S."/>
            <person name="Chain P."/>
            <person name="Malfatti S."/>
            <person name="Shin M."/>
            <person name="Vergez L."/>
            <person name="Schmutz J."/>
            <person name="Larimer F."/>
            <person name="Land M."/>
            <person name="Hauser L."/>
            <person name="Kyrpides N."/>
            <person name="Mikhailova N."/>
            <person name="Reeve W.G."/>
            <person name="Richardson P."/>
        </authorList>
    </citation>
    <scope>NUCLEOTIDE SEQUENCE [LARGE SCALE GENOMIC DNA]</scope>
    <source>
        <strain>WSM419</strain>
    </source>
</reference>
<comment type="subcellular location">
    <subcellularLocation>
        <location evidence="1">Cell inner membrane</location>
        <topology evidence="1">Multi-pass membrane protein</topology>
    </subcellularLocation>
</comment>
<comment type="similarity">
    <text evidence="1">Belongs to the UPF0060 family.</text>
</comment>
<accession>A6U785</accession>
<dbReference type="EMBL" id="CP000738">
    <property type="protein sequence ID" value="ABR59515.1"/>
    <property type="molecule type" value="Genomic_DNA"/>
</dbReference>
<dbReference type="RefSeq" id="WP_011974861.1">
    <property type="nucleotide sequence ID" value="NC_009636.1"/>
</dbReference>
<dbReference type="RefSeq" id="YP_001326350.1">
    <property type="nucleotide sequence ID" value="NC_009636.1"/>
</dbReference>
<dbReference type="SMR" id="A6U785"/>
<dbReference type="STRING" id="366394.Smed_0659"/>
<dbReference type="KEGG" id="smd:Smed_0659"/>
<dbReference type="PATRIC" id="fig|366394.8.peg.3759"/>
<dbReference type="eggNOG" id="COG1742">
    <property type="taxonomic scope" value="Bacteria"/>
</dbReference>
<dbReference type="HOGENOM" id="CLU_117653_1_0_5"/>
<dbReference type="OrthoDB" id="123240at2"/>
<dbReference type="Proteomes" id="UP000001108">
    <property type="component" value="Chromosome"/>
</dbReference>
<dbReference type="GO" id="GO:0005886">
    <property type="term" value="C:plasma membrane"/>
    <property type="evidence" value="ECO:0007669"/>
    <property type="project" value="UniProtKB-SubCell"/>
</dbReference>
<dbReference type="HAMAP" id="MF_00010">
    <property type="entry name" value="UPF0060"/>
    <property type="match status" value="1"/>
</dbReference>
<dbReference type="InterPro" id="IPR003844">
    <property type="entry name" value="UPF0060"/>
</dbReference>
<dbReference type="NCBIfam" id="NF002586">
    <property type="entry name" value="PRK02237.1"/>
    <property type="match status" value="1"/>
</dbReference>
<dbReference type="PANTHER" id="PTHR36116">
    <property type="entry name" value="UPF0060 MEMBRANE PROTEIN YNFA"/>
    <property type="match status" value="1"/>
</dbReference>
<dbReference type="PANTHER" id="PTHR36116:SF1">
    <property type="entry name" value="UPF0060 MEMBRANE PROTEIN YNFA"/>
    <property type="match status" value="1"/>
</dbReference>
<dbReference type="Pfam" id="PF02694">
    <property type="entry name" value="UPF0060"/>
    <property type="match status" value="1"/>
</dbReference>
<dbReference type="SUPFAM" id="SSF103481">
    <property type="entry name" value="Multidrug resistance efflux transporter EmrE"/>
    <property type="match status" value="1"/>
</dbReference>
<protein>
    <recommendedName>
        <fullName evidence="1">UPF0060 membrane protein Smed_0659</fullName>
    </recommendedName>
</protein>
<organism>
    <name type="scientific">Sinorhizobium medicae (strain WSM419)</name>
    <name type="common">Ensifer medicae</name>
    <dbReference type="NCBI Taxonomy" id="366394"/>
    <lineage>
        <taxon>Bacteria</taxon>
        <taxon>Pseudomonadati</taxon>
        <taxon>Pseudomonadota</taxon>
        <taxon>Alphaproteobacteria</taxon>
        <taxon>Hyphomicrobiales</taxon>
        <taxon>Rhizobiaceae</taxon>
        <taxon>Sinorhizobium/Ensifer group</taxon>
        <taxon>Sinorhizobium</taxon>
    </lineage>
</organism>
<sequence length="106" mass="11312">MPAFAIYFLAALAEIAGCFTFWAWLRLGKSGLWLLPGMASLAIFAWLLTMVDTPAAGRAYAAYGGIYIIASLCWLWVAEGARPDRWDMTGAAVALAGSAIILAGPR</sequence>